<protein>
    <recommendedName>
        <fullName evidence="1">Deoxyuridine 5'-triphosphate nucleotidohydrolase</fullName>
        <shortName evidence="1">dUTPase</shortName>
        <ecNumber evidence="1">3.6.1.23</ecNumber>
    </recommendedName>
    <alternativeName>
        <fullName evidence="1">dUTP pyrophosphatase</fullName>
    </alternativeName>
</protein>
<comment type="function">
    <text evidence="1">This enzyme is involved in nucleotide metabolism: it produces dUMP, the immediate precursor of thymidine nucleotides and it decreases the intracellular concentration of dUTP so that uracil cannot be incorporated into DNA.</text>
</comment>
<comment type="catalytic activity">
    <reaction evidence="1">
        <text>dUTP + H2O = dUMP + diphosphate + H(+)</text>
        <dbReference type="Rhea" id="RHEA:10248"/>
        <dbReference type="ChEBI" id="CHEBI:15377"/>
        <dbReference type="ChEBI" id="CHEBI:15378"/>
        <dbReference type="ChEBI" id="CHEBI:33019"/>
        <dbReference type="ChEBI" id="CHEBI:61555"/>
        <dbReference type="ChEBI" id="CHEBI:246422"/>
        <dbReference type="EC" id="3.6.1.23"/>
    </reaction>
</comment>
<comment type="cofactor">
    <cofactor evidence="1">
        <name>Mg(2+)</name>
        <dbReference type="ChEBI" id="CHEBI:18420"/>
    </cofactor>
</comment>
<comment type="pathway">
    <text evidence="1">Pyrimidine metabolism; dUMP biosynthesis; dUMP from dCTP (dUTP route): step 2/2.</text>
</comment>
<comment type="similarity">
    <text evidence="1">Belongs to the dUTPase family.</text>
</comment>
<name>DUT_LEPIC</name>
<gene>
    <name evidence="1" type="primary">dut</name>
    <name type="ordered locus">LIC_12560</name>
</gene>
<evidence type="ECO:0000255" key="1">
    <source>
        <dbReference type="HAMAP-Rule" id="MF_00116"/>
    </source>
</evidence>
<keyword id="KW-0378">Hydrolase</keyword>
<keyword id="KW-0460">Magnesium</keyword>
<keyword id="KW-0479">Metal-binding</keyword>
<keyword id="KW-0546">Nucleotide metabolism</keyword>
<feature type="chain" id="PRO_0000182877" description="Deoxyuridine 5'-triphosphate nucleotidohydrolase">
    <location>
        <begin position="1"/>
        <end position="145"/>
    </location>
</feature>
<feature type="binding site" evidence="1">
    <location>
        <begin position="64"/>
        <end position="66"/>
    </location>
    <ligand>
        <name>substrate</name>
    </ligand>
</feature>
<feature type="binding site" evidence="1">
    <location>
        <position position="77"/>
    </location>
    <ligand>
        <name>substrate</name>
    </ligand>
</feature>
<feature type="binding site" evidence="1">
    <location>
        <begin position="81"/>
        <end position="83"/>
    </location>
    <ligand>
        <name>substrate</name>
    </ligand>
</feature>
<feature type="binding site" evidence="1">
    <location>
        <position position="91"/>
    </location>
    <ligand>
        <name>substrate</name>
    </ligand>
</feature>
<accession>P61909</accession>
<dbReference type="EC" id="3.6.1.23" evidence="1"/>
<dbReference type="EMBL" id="AE016823">
    <property type="protein sequence ID" value="AAS71124.1"/>
    <property type="molecule type" value="Genomic_DNA"/>
</dbReference>
<dbReference type="RefSeq" id="WP_000689546.1">
    <property type="nucleotide sequence ID" value="NC_005823.1"/>
</dbReference>
<dbReference type="SMR" id="P61909"/>
<dbReference type="GeneID" id="61142438"/>
<dbReference type="KEGG" id="lic:LIC_12560"/>
<dbReference type="HOGENOM" id="CLU_068508_1_2_12"/>
<dbReference type="UniPathway" id="UPA00610">
    <property type="reaction ID" value="UER00666"/>
</dbReference>
<dbReference type="Proteomes" id="UP000007037">
    <property type="component" value="Chromosome I"/>
</dbReference>
<dbReference type="GO" id="GO:0004170">
    <property type="term" value="F:dUTP diphosphatase activity"/>
    <property type="evidence" value="ECO:0007669"/>
    <property type="project" value="UniProtKB-UniRule"/>
</dbReference>
<dbReference type="GO" id="GO:0000287">
    <property type="term" value="F:magnesium ion binding"/>
    <property type="evidence" value="ECO:0007669"/>
    <property type="project" value="UniProtKB-UniRule"/>
</dbReference>
<dbReference type="GO" id="GO:0006226">
    <property type="term" value="P:dUMP biosynthetic process"/>
    <property type="evidence" value="ECO:0007669"/>
    <property type="project" value="UniProtKB-UniRule"/>
</dbReference>
<dbReference type="GO" id="GO:0046081">
    <property type="term" value="P:dUTP catabolic process"/>
    <property type="evidence" value="ECO:0007669"/>
    <property type="project" value="InterPro"/>
</dbReference>
<dbReference type="CDD" id="cd07557">
    <property type="entry name" value="trimeric_dUTPase"/>
    <property type="match status" value="1"/>
</dbReference>
<dbReference type="Gene3D" id="2.70.40.10">
    <property type="match status" value="1"/>
</dbReference>
<dbReference type="HAMAP" id="MF_00116">
    <property type="entry name" value="dUTPase_bact"/>
    <property type="match status" value="1"/>
</dbReference>
<dbReference type="InterPro" id="IPR008181">
    <property type="entry name" value="dUTPase"/>
</dbReference>
<dbReference type="InterPro" id="IPR029054">
    <property type="entry name" value="dUTPase-like"/>
</dbReference>
<dbReference type="InterPro" id="IPR036157">
    <property type="entry name" value="dUTPase-like_sf"/>
</dbReference>
<dbReference type="InterPro" id="IPR033704">
    <property type="entry name" value="dUTPase_trimeric"/>
</dbReference>
<dbReference type="NCBIfam" id="TIGR00576">
    <property type="entry name" value="dut"/>
    <property type="match status" value="1"/>
</dbReference>
<dbReference type="NCBIfam" id="NF001862">
    <property type="entry name" value="PRK00601.1"/>
    <property type="match status" value="1"/>
</dbReference>
<dbReference type="PANTHER" id="PTHR11241">
    <property type="entry name" value="DEOXYURIDINE 5'-TRIPHOSPHATE NUCLEOTIDOHYDROLASE"/>
    <property type="match status" value="1"/>
</dbReference>
<dbReference type="PANTHER" id="PTHR11241:SF0">
    <property type="entry name" value="DEOXYURIDINE 5'-TRIPHOSPHATE NUCLEOTIDOHYDROLASE"/>
    <property type="match status" value="1"/>
</dbReference>
<dbReference type="Pfam" id="PF00692">
    <property type="entry name" value="dUTPase"/>
    <property type="match status" value="1"/>
</dbReference>
<dbReference type="SUPFAM" id="SSF51283">
    <property type="entry name" value="dUTPase-like"/>
    <property type="match status" value="1"/>
</dbReference>
<proteinExistence type="inferred from homology"/>
<sequence>MKIFVQKLRPNAELPLLQTKQAAGYDIHACLDSKLVLEPGNVGLVPTGLSFAIPQEFHFEIRPRSGFSTKNRILIPNSPGTIDSDYRGELMIPLLNLGDSSFIIEHGMRIAQLLIRKTWYADWELVSEFADRTERGANGFGSTGH</sequence>
<reference key="1">
    <citation type="journal article" date="2004" name="J. Bacteriol.">
        <title>Comparative genomics of two Leptospira interrogans serovars reveals novel insights into physiology and pathogenesis.</title>
        <authorList>
            <person name="Nascimento A.L.T.O."/>
            <person name="Ko A.I."/>
            <person name="Martins E.A.L."/>
            <person name="Monteiro-Vitorello C.B."/>
            <person name="Ho P.L."/>
            <person name="Haake D.A."/>
            <person name="Verjovski-Almeida S."/>
            <person name="Hartskeerl R.A."/>
            <person name="Marques M.V."/>
            <person name="Oliveira M.C."/>
            <person name="Menck C.F.M."/>
            <person name="Leite L.C.C."/>
            <person name="Carrer H."/>
            <person name="Coutinho L.L."/>
            <person name="Degrave W.M."/>
            <person name="Dellagostin O.A."/>
            <person name="El-Dorry H."/>
            <person name="Ferro E.S."/>
            <person name="Ferro M.I.T."/>
            <person name="Furlan L.R."/>
            <person name="Gamberini M."/>
            <person name="Giglioti E.A."/>
            <person name="Goes-Neto A."/>
            <person name="Goldman G.H."/>
            <person name="Goldman M.H.S."/>
            <person name="Harakava R."/>
            <person name="Jeronimo S.M.B."/>
            <person name="Junqueira-de-Azevedo I.L.M."/>
            <person name="Kimura E.T."/>
            <person name="Kuramae E.E."/>
            <person name="Lemos E.G.M."/>
            <person name="Lemos M.V.F."/>
            <person name="Marino C.L."/>
            <person name="Nunes L.R."/>
            <person name="de Oliveira R.C."/>
            <person name="Pereira G.G."/>
            <person name="Reis M.S."/>
            <person name="Schriefer A."/>
            <person name="Siqueira W.J."/>
            <person name="Sommer P."/>
            <person name="Tsai S.M."/>
            <person name="Simpson A.J.G."/>
            <person name="Ferro J.A."/>
            <person name="Camargo L.E.A."/>
            <person name="Kitajima J.P."/>
            <person name="Setubal J.C."/>
            <person name="Van Sluys M.A."/>
        </authorList>
    </citation>
    <scope>NUCLEOTIDE SEQUENCE [LARGE SCALE GENOMIC DNA]</scope>
    <source>
        <strain>Fiocruz L1-130</strain>
    </source>
</reference>
<organism>
    <name type="scientific">Leptospira interrogans serogroup Icterohaemorrhagiae serovar copenhageni (strain Fiocruz L1-130)</name>
    <dbReference type="NCBI Taxonomy" id="267671"/>
    <lineage>
        <taxon>Bacteria</taxon>
        <taxon>Pseudomonadati</taxon>
        <taxon>Spirochaetota</taxon>
        <taxon>Spirochaetia</taxon>
        <taxon>Leptospirales</taxon>
        <taxon>Leptospiraceae</taxon>
        <taxon>Leptospira</taxon>
    </lineage>
</organism>